<sequence>MRSYLDFEKPVAELEAKLEELRALGARDGAVAIAEDVARLESKAAAALAELYAALTPWQKTQVARHPQRPHFVDYCDALISEFTPLAGDRSFGEDEAIVGGFGRFRGRPVCVIGQEKGASTEARIRHNFGMARPEGYRKAVRLMDLAGRFGLPVLTFVDTAGAYPGIDAEERGQAEAIARSTEACLALGTPNLALVIGEGGSGGAIALATANRVLMLEHAIYSVISPEGAASILWRDAGRAQDAATAMKITAQDLLRLGVIDAIVPEPTGGAHRDPAAAFRAAEEAIAEGLAGLDGLDAEALRDQRAQKFLEIGRKL</sequence>
<organism>
    <name type="scientific">Methylobacterium sp. (strain 4-46)</name>
    <dbReference type="NCBI Taxonomy" id="426117"/>
    <lineage>
        <taxon>Bacteria</taxon>
        <taxon>Pseudomonadati</taxon>
        <taxon>Pseudomonadota</taxon>
        <taxon>Alphaproteobacteria</taxon>
        <taxon>Hyphomicrobiales</taxon>
        <taxon>Methylobacteriaceae</taxon>
        <taxon>Methylobacterium</taxon>
    </lineage>
</organism>
<reference key="1">
    <citation type="submission" date="2008-02" db="EMBL/GenBank/DDBJ databases">
        <title>Complete sequence of chromosome of Methylobacterium sp. 4-46.</title>
        <authorList>
            <consortium name="US DOE Joint Genome Institute"/>
            <person name="Copeland A."/>
            <person name="Lucas S."/>
            <person name="Lapidus A."/>
            <person name="Glavina del Rio T."/>
            <person name="Dalin E."/>
            <person name="Tice H."/>
            <person name="Bruce D."/>
            <person name="Goodwin L."/>
            <person name="Pitluck S."/>
            <person name="Chertkov O."/>
            <person name="Brettin T."/>
            <person name="Detter J.C."/>
            <person name="Han C."/>
            <person name="Kuske C.R."/>
            <person name="Schmutz J."/>
            <person name="Larimer F."/>
            <person name="Land M."/>
            <person name="Hauser L."/>
            <person name="Kyrpides N."/>
            <person name="Ivanova N."/>
            <person name="Marx C.J."/>
            <person name="Richardson P."/>
        </authorList>
    </citation>
    <scope>NUCLEOTIDE SEQUENCE [LARGE SCALE GENOMIC DNA]</scope>
    <source>
        <strain>4-46</strain>
    </source>
</reference>
<dbReference type="EC" id="2.1.3.15" evidence="1"/>
<dbReference type="EMBL" id="CP000943">
    <property type="protein sequence ID" value="ACA19126.1"/>
    <property type="molecule type" value="Genomic_DNA"/>
</dbReference>
<dbReference type="RefSeq" id="WP_012334513.1">
    <property type="nucleotide sequence ID" value="NC_010511.1"/>
</dbReference>
<dbReference type="SMR" id="B0UBU9"/>
<dbReference type="STRING" id="426117.M446_4796"/>
<dbReference type="KEGG" id="met:M446_4796"/>
<dbReference type="eggNOG" id="COG0825">
    <property type="taxonomic scope" value="Bacteria"/>
</dbReference>
<dbReference type="HOGENOM" id="CLU_015486_0_2_5"/>
<dbReference type="UniPathway" id="UPA00655">
    <property type="reaction ID" value="UER00711"/>
</dbReference>
<dbReference type="GO" id="GO:0009317">
    <property type="term" value="C:acetyl-CoA carboxylase complex"/>
    <property type="evidence" value="ECO:0007669"/>
    <property type="project" value="InterPro"/>
</dbReference>
<dbReference type="GO" id="GO:0003989">
    <property type="term" value="F:acetyl-CoA carboxylase activity"/>
    <property type="evidence" value="ECO:0007669"/>
    <property type="project" value="InterPro"/>
</dbReference>
<dbReference type="GO" id="GO:0005524">
    <property type="term" value="F:ATP binding"/>
    <property type="evidence" value="ECO:0007669"/>
    <property type="project" value="UniProtKB-KW"/>
</dbReference>
<dbReference type="GO" id="GO:0016743">
    <property type="term" value="F:carboxyl- or carbamoyltransferase activity"/>
    <property type="evidence" value="ECO:0007669"/>
    <property type="project" value="UniProtKB-UniRule"/>
</dbReference>
<dbReference type="GO" id="GO:0006633">
    <property type="term" value="P:fatty acid biosynthetic process"/>
    <property type="evidence" value="ECO:0007669"/>
    <property type="project" value="UniProtKB-KW"/>
</dbReference>
<dbReference type="GO" id="GO:2001295">
    <property type="term" value="P:malonyl-CoA biosynthetic process"/>
    <property type="evidence" value="ECO:0007669"/>
    <property type="project" value="UniProtKB-UniRule"/>
</dbReference>
<dbReference type="Gene3D" id="3.90.226.10">
    <property type="entry name" value="2-enoyl-CoA Hydratase, Chain A, domain 1"/>
    <property type="match status" value="1"/>
</dbReference>
<dbReference type="HAMAP" id="MF_00823">
    <property type="entry name" value="AcetylCoA_CT_alpha"/>
    <property type="match status" value="1"/>
</dbReference>
<dbReference type="InterPro" id="IPR001095">
    <property type="entry name" value="Acetyl_CoA_COase_a_su"/>
</dbReference>
<dbReference type="InterPro" id="IPR029045">
    <property type="entry name" value="ClpP/crotonase-like_dom_sf"/>
</dbReference>
<dbReference type="InterPro" id="IPR011763">
    <property type="entry name" value="COA_CT_C"/>
</dbReference>
<dbReference type="NCBIfam" id="TIGR00513">
    <property type="entry name" value="accA"/>
    <property type="match status" value="1"/>
</dbReference>
<dbReference type="NCBIfam" id="NF041504">
    <property type="entry name" value="AccA_sub"/>
    <property type="match status" value="1"/>
</dbReference>
<dbReference type="NCBIfam" id="NF004344">
    <property type="entry name" value="PRK05724.1"/>
    <property type="match status" value="1"/>
</dbReference>
<dbReference type="PANTHER" id="PTHR42853">
    <property type="entry name" value="ACETYL-COENZYME A CARBOXYLASE CARBOXYL TRANSFERASE SUBUNIT ALPHA"/>
    <property type="match status" value="1"/>
</dbReference>
<dbReference type="PANTHER" id="PTHR42853:SF3">
    <property type="entry name" value="ACETYL-COENZYME A CARBOXYLASE CARBOXYL TRANSFERASE SUBUNIT ALPHA, CHLOROPLASTIC"/>
    <property type="match status" value="1"/>
</dbReference>
<dbReference type="Pfam" id="PF03255">
    <property type="entry name" value="ACCA"/>
    <property type="match status" value="1"/>
</dbReference>
<dbReference type="PRINTS" id="PR01069">
    <property type="entry name" value="ACCCTRFRASEA"/>
</dbReference>
<dbReference type="SUPFAM" id="SSF52096">
    <property type="entry name" value="ClpP/crotonase"/>
    <property type="match status" value="1"/>
</dbReference>
<dbReference type="PROSITE" id="PS50989">
    <property type="entry name" value="COA_CT_CTER"/>
    <property type="match status" value="1"/>
</dbReference>
<protein>
    <recommendedName>
        <fullName evidence="1">Acetyl-coenzyme A carboxylase carboxyl transferase subunit alpha</fullName>
        <shortName evidence="1">ACCase subunit alpha</shortName>
        <shortName evidence="1">Acetyl-CoA carboxylase carboxyltransferase subunit alpha</shortName>
        <ecNumber evidence="1">2.1.3.15</ecNumber>
    </recommendedName>
</protein>
<evidence type="ECO:0000255" key="1">
    <source>
        <dbReference type="HAMAP-Rule" id="MF_00823"/>
    </source>
</evidence>
<evidence type="ECO:0000255" key="2">
    <source>
        <dbReference type="PROSITE-ProRule" id="PRU01137"/>
    </source>
</evidence>
<keyword id="KW-0067">ATP-binding</keyword>
<keyword id="KW-0963">Cytoplasm</keyword>
<keyword id="KW-0275">Fatty acid biosynthesis</keyword>
<keyword id="KW-0276">Fatty acid metabolism</keyword>
<keyword id="KW-0444">Lipid biosynthesis</keyword>
<keyword id="KW-0443">Lipid metabolism</keyword>
<keyword id="KW-0547">Nucleotide-binding</keyword>
<keyword id="KW-0808">Transferase</keyword>
<name>ACCA_METS4</name>
<gene>
    <name evidence="1" type="primary">accA</name>
    <name type="ordered locus">M446_4796</name>
</gene>
<comment type="function">
    <text evidence="1">Component of the acetyl coenzyme A carboxylase (ACC) complex. First, biotin carboxylase catalyzes the carboxylation of biotin on its carrier protein (BCCP) and then the CO(2) group is transferred by the carboxyltransferase to acetyl-CoA to form malonyl-CoA.</text>
</comment>
<comment type="catalytic activity">
    <reaction evidence="1">
        <text>N(6)-carboxybiotinyl-L-lysyl-[protein] + acetyl-CoA = N(6)-biotinyl-L-lysyl-[protein] + malonyl-CoA</text>
        <dbReference type="Rhea" id="RHEA:54728"/>
        <dbReference type="Rhea" id="RHEA-COMP:10505"/>
        <dbReference type="Rhea" id="RHEA-COMP:10506"/>
        <dbReference type="ChEBI" id="CHEBI:57288"/>
        <dbReference type="ChEBI" id="CHEBI:57384"/>
        <dbReference type="ChEBI" id="CHEBI:83144"/>
        <dbReference type="ChEBI" id="CHEBI:83145"/>
        <dbReference type="EC" id="2.1.3.15"/>
    </reaction>
</comment>
<comment type="pathway">
    <text evidence="1">Lipid metabolism; malonyl-CoA biosynthesis; malonyl-CoA from acetyl-CoA: step 1/1.</text>
</comment>
<comment type="subunit">
    <text evidence="1">Acetyl-CoA carboxylase is a heterohexamer composed of biotin carboxyl carrier protein (AccB), biotin carboxylase (AccC) and two subunits each of ACCase subunit alpha (AccA) and ACCase subunit beta (AccD).</text>
</comment>
<comment type="subcellular location">
    <subcellularLocation>
        <location evidence="1">Cytoplasm</location>
    </subcellularLocation>
</comment>
<comment type="similarity">
    <text evidence="1">Belongs to the AccA family.</text>
</comment>
<feature type="chain" id="PRO_1000134499" description="Acetyl-coenzyme A carboxylase carboxyl transferase subunit alpha">
    <location>
        <begin position="1"/>
        <end position="317"/>
    </location>
</feature>
<feature type="domain" description="CoA carboxyltransferase C-terminal" evidence="2">
    <location>
        <begin position="39"/>
        <end position="293"/>
    </location>
</feature>
<proteinExistence type="inferred from homology"/>
<accession>B0UBU9</accession>